<proteinExistence type="evidence at protein level"/>
<dbReference type="EMBL" id="BC037406">
    <property type="protein sequence ID" value="AAH37406.1"/>
    <property type="molecule type" value="mRNA"/>
</dbReference>
<dbReference type="CCDS" id="CCDS8154.1"/>
<dbReference type="RefSeq" id="NP_001171351.1">
    <property type="nucleotide sequence ID" value="NM_001177880.2"/>
</dbReference>
<dbReference type="RefSeq" id="NP_808878.1">
    <property type="nucleotide sequence ID" value="NM_177963.4"/>
</dbReference>
<dbReference type="RefSeq" id="XP_011543649.1">
    <property type="nucleotide sequence ID" value="XM_011545347.2"/>
</dbReference>
<dbReference type="RefSeq" id="XP_054226468.1">
    <property type="nucleotide sequence ID" value="XM_054370493.1"/>
</dbReference>
<dbReference type="SMR" id="Q8IV01"/>
<dbReference type="BioGRID" id="124864">
    <property type="interactions" value="26"/>
</dbReference>
<dbReference type="FunCoup" id="Q8IV01">
    <property type="interactions" value="70"/>
</dbReference>
<dbReference type="IntAct" id="Q8IV01">
    <property type="interactions" value="17"/>
</dbReference>
<dbReference type="MINT" id="Q8IV01"/>
<dbReference type="STRING" id="9606.ENSP00000377520"/>
<dbReference type="GlyGen" id="Q8IV01">
    <property type="glycosylation" value="1 site, 1 N-linked glycan (1 site)"/>
</dbReference>
<dbReference type="iPTMnet" id="Q8IV01"/>
<dbReference type="PhosphoSitePlus" id="Q8IV01"/>
<dbReference type="BioMuta" id="SYT12"/>
<dbReference type="DMDM" id="33151152"/>
<dbReference type="MassIVE" id="Q8IV01"/>
<dbReference type="PaxDb" id="9606-ENSP00000377520"/>
<dbReference type="PeptideAtlas" id="Q8IV01"/>
<dbReference type="ProteomicsDB" id="70636"/>
<dbReference type="Pumba" id="Q8IV01"/>
<dbReference type="Antibodypedia" id="2614">
    <property type="antibodies" value="180 antibodies from 30 providers"/>
</dbReference>
<dbReference type="DNASU" id="91683"/>
<dbReference type="Ensembl" id="ENST00000393946.6">
    <property type="protein sequence ID" value="ENSP00000377520.2"/>
    <property type="gene ID" value="ENSG00000173227.14"/>
</dbReference>
<dbReference type="Ensembl" id="ENST00000525457.5">
    <property type="protein sequence ID" value="ENSP00000431400.1"/>
    <property type="gene ID" value="ENSG00000173227.14"/>
</dbReference>
<dbReference type="Ensembl" id="ENST00000527043.6">
    <property type="protein sequence ID" value="ENSP00000435316.1"/>
    <property type="gene ID" value="ENSG00000173227.14"/>
</dbReference>
<dbReference type="GeneID" id="91683"/>
<dbReference type="KEGG" id="hsa:91683"/>
<dbReference type="MANE-Select" id="ENST00000527043.6">
    <property type="protein sequence ID" value="ENSP00000435316.1"/>
    <property type="RefSeq nucleotide sequence ID" value="NM_177963.4"/>
    <property type="RefSeq protein sequence ID" value="NP_808878.1"/>
</dbReference>
<dbReference type="UCSC" id="uc001oju.4">
    <property type="organism name" value="human"/>
</dbReference>
<dbReference type="AGR" id="HGNC:18381"/>
<dbReference type="CTD" id="91683"/>
<dbReference type="DisGeNET" id="91683"/>
<dbReference type="GeneCards" id="SYT12"/>
<dbReference type="HGNC" id="HGNC:18381">
    <property type="gene designation" value="SYT12"/>
</dbReference>
<dbReference type="HPA" id="ENSG00000173227">
    <property type="expression patterns" value="Group enriched (brain, liver, parathyroid gland)"/>
</dbReference>
<dbReference type="MIM" id="606436">
    <property type="type" value="gene"/>
</dbReference>
<dbReference type="neXtProt" id="NX_Q8IV01"/>
<dbReference type="OpenTargets" id="ENSG00000173227"/>
<dbReference type="PharmGKB" id="PA38321"/>
<dbReference type="VEuPathDB" id="HostDB:ENSG00000173227"/>
<dbReference type="eggNOG" id="KOG1028">
    <property type="taxonomic scope" value="Eukaryota"/>
</dbReference>
<dbReference type="GeneTree" id="ENSGT00940000158627"/>
<dbReference type="HOGENOM" id="CLU_053862_0_0_1"/>
<dbReference type="InParanoid" id="Q8IV01"/>
<dbReference type="OMA" id="LQPFGGW"/>
<dbReference type="OrthoDB" id="67700at2759"/>
<dbReference type="PAN-GO" id="Q8IV01">
    <property type="GO annotations" value="11 GO annotations based on evolutionary models"/>
</dbReference>
<dbReference type="PhylomeDB" id="Q8IV01"/>
<dbReference type="TreeFam" id="TF315600"/>
<dbReference type="PathwayCommons" id="Q8IV01"/>
<dbReference type="Reactome" id="R-HSA-6794361">
    <property type="pathway name" value="Neurexins and neuroligins"/>
</dbReference>
<dbReference type="SignaLink" id="Q8IV01"/>
<dbReference type="BioGRID-ORCS" id="91683">
    <property type="hits" value="24 hits in 1146 CRISPR screens"/>
</dbReference>
<dbReference type="ChiTaRS" id="SYT12">
    <property type="organism name" value="human"/>
</dbReference>
<dbReference type="GenomeRNAi" id="91683"/>
<dbReference type="Pharos" id="Q8IV01">
    <property type="development level" value="Tbio"/>
</dbReference>
<dbReference type="PRO" id="PR:Q8IV01"/>
<dbReference type="Proteomes" id="UP000005640">
    <property type="component" value="Chromosome 11"/>
</dbReference>
<dbReference type="RNAct" id="Q8IV01">
    <property type="molecule type" value="protein"/>
</dbReference>
<dbReference type="Bgee" id="ENSG00000173227">
    <property type="expression patterns" value="Expressed in right hemisphere of cerebellum and 140 other cell types or tissues"/>
</dbReference>
<dbReference type="ExpressionAtlas" id="Q8IV01">
    <property type="expression patterns" value="baseline and differential"/>
</dbReference>
<dbReference type="GO" id="GO:0070382">
    <property type="term" value="C:exocytic vesicle"/>
    <property type="evidence" value="ECO:0000318"/>
    <property type="project" value="GO_Central"/>
</dbReference>
<dbReference type="GO" id="GO:0098686">
    <property type="term" value="C:hippocampal mossy fiber to CA3 synapse"/>
    <property type="evidence" value="ECO:0007669"/>
    <property type="project" value="Ensembl"/>
</dbReference>
<dbReference type="GO" id="GO:0005886">
    <property type="term" value="C:plasma membrane"/>
    <property type="evidence" value="ECO:0000318"/>
    <property type="project" value="GO_Central"/>
</dbReference>
<dbReference type="GO" id="GO:0030672">
    <property type="term" value="C:synaptic vesicle membrane"/>
    <property type="evidence" value="ECO:0007669"/>
    <property type="project" value="UniProtKB-SubCell"/>
</dbReference>
<dbReference type="GO" id="GO:0061891">
    <property type="term" value="F:calcium ion sensor activity"/>
    <property type="evidence" value="ECO:0000318"/>
    <property type="project" value="GO_Central"/>
</dbReference>
<dbReference type="GO" id="GO:0005544">
    <property type="term" value="F:calcium-dependent phospholipid binding"/>
    <property type="evidence" value="ECO:0000318"/>
    <property type="project" value="GO_Central"/>
</dbReference>
<dbReference type="GO" id="GO:0000149">
    <property type="term" value="F:SNARE binding"/>
    <property type="evidence" value="ECO:0000318"/>
    <property type="project" value="GO_Central"/>
</dbReference>
<dbReference type="GO" id="GO:0060291">
    <property type="term" value="P:long-term synaptic potentiation"/>
    <property type="evidence" value="ECO:0007669"/>
    <property type="project" value="Ensembl"/>
</dbReference>
<dbReference type="GO" id="GO:0099171">
    <property type="term" value="P:presynaptic modulation of chemical synaptic transmission"/>
    <property type="evidence" value="ECO:0007669"/>
    <property type="project" value="Ensembl"/>
</dbReference>
<dbReference type="GO" id="GO:0017158">
    <property type="term" value="P:regulation of calcium ion-dependent exocytosis"/>
    <property type="evidence" value="ECO:0000318"/>
    <property type="project" value="GO_Central"/>
</dbReference>
<dbReference type="GO" id="GO:0048792">
    <property type="term" value="P:spontaneous exocytosis of neurotransmitter"/>
    <property type="evidence" value="ECO:0007669"/>
    <property type="project" value="Ensembl"/>
</dbReference>
<dbReference type="GO" id="GO:0016192">
    <property type="term" value="P:vesicle-mediated transport"/>
    <property type="evidence" value="ECO:0000318"/>
    <property type="project" value="GO_Central"/>
</dbReference>
<dbReference type="CDD" id="cd08406">
    <property type="entry name" value="C2B_Synaptotagmin-12"/>
    <property type="match status" value="1"/>
</dbReference>
<dbReference type="FunFam" id="2.60.40.150:FF:000080">
    <property type="entry name" value="Putative synaptotagmin-12"/>
    <property type="match status" value="1"/>
</dbReference>
<dbReference type="FunFam" id="2.60.40.150:FF:000129">
    <property type="entry name" value="Synaptotagmin 12"/>
    <property type="match status" value="1"/>
</dbReference>
<dbReference type="Gene3D" id="2.60.40.150">
    <property type="entry name" value="C2 domain"/>
    <property type="match status" value="2"/>
</dbReference>
<dbReference type="InterPro" id="IPR000008">
    <property type="entry name" value="C2_dom"/>
</dbReference>
<dbReference type="InterPro" id="IPR035892">
    <property type="entry name" value="C2_domain_sf"/>
</dbReference>
<dbReference type="InterPro" id="IPR030537">
    <property type="entry name" value="Syt12_C2B"/>
</dbReference>
<dbReference type="PANTHER" id="PTHR10024">
    <property type="entry name" value="SYNAPTOTAGMIN"/>
    <property type="match status" value="1"/>
</dbReference>
<dbReference type="PANTHER" id="PTHR10024:SF252">
    <property type="entry name" value="SYNAPTOTAGMIN-12"/>
    <property type="match status" value="1"/>
</dbReference>
<dbReference type="Pfam" id="PF00168">
    <property type="entry name" value="C2"/>
    <property type="match status" value="2"/>
</dbReference>
<dbReference type="SMART" id="SM00239">
    <property type="entry name" value="C2"/>
    <property type="match status" value="2"/>
</dbReference>
<dbReference type="SUPFAM" id="SSF49562">
    <property type="entry name" value="C2 domain (Calcium/lipid-binding domain, CaLB)"/>
    <property type="match status" value="2"/>
</dbReference>
<dbReference type="PROSITE" id="PS50004">
    <property type="entry name" value="C2"/>
    <property type="match status" value="2"/>
</dbReference>
<comment type="function">
    <text evidence="1 2">Synaptic vesicle phosphoprotein that enhances spontaneous neurotransmitter release but does not effect induced neurotransmitter release (By similarity). Unlike other synaptotagmins, it does not bind Ca(2+) or phospholipids (By similarity). Essential for mossy-fiber long-term potentiation in the hippocampus (By similarity).</text>
</comment>
<comment type="subunit">
    <text evidence="1 3">Homodimer (By similarity). Can also form heterodimers (By similarity). Interacts with SYT1 (By similarity).</text>
</comment>
<comment type="subcellular location">
    <subcellularLocation>
        <location evidence="1">Cytoplasmic vesicle</location>
        <location evidence="1">Secretory vesicle</location>
        <location evidence="1">Synaptic vesicle membrane</location>
        <topology evidence="4">Single-pass membrane protein</topology>
    </subcellularLocation>
</comment>
<comment type="PTM">
    <text evidence="2">Phosphorylation of Ser-97 is required for mossy-fiber long-term potentiation.</text>
</comment>
<comment type="similarity">
    <text evidence="6">Belongs to the synaptotagmin family.</text>
</comment>
<accession>Q8IV01</accession>
<name>SYT12_HUMAN</name>
<evidence type="ECO:0000250" key="1">
    <source>
        <dbReference type="UniProtKB" id="P97610"/>
    </source>
</evidence>
<evidence type="ECO:0000250" key="2">
    <source>
        <dbReference type="UniProtKB" id="Q920N7"/>
    </source>
</evidence>
<evidence type="ECO:0000250" key="3">
    <source>
        <dbReference type="UniProtKB" id="Q9R0N7"/>
    </source>
</evidence>
<evidence type="ECO:0000255" key="4"/>
<evidence type="ECO:0000255" key="5">
    <source>
        <dbReference type="PROSITE-ProRule" id="PRU00041"/>
    </source>
</evidence>
<evidence type="ECO:0000305" key="6"/>
<gene>
    <name type="primary">SYT12</name>
</gene>
<reference key="1">
    <citation type="journal article" date="2004" name="Genome Res.">
        <title>The status, quality, and expansion of the NIH full-length cDNA project: the Mammalian Gene Collection (MGC).</title>
        <authorList>
            <consortium name="The MGC Project Team"/>
        </authorList>
    </citation>
    <scope>NUCLEOTIDE SEQUENCE [LARGE SCALE MRNA]</scope>
    <source>
        <tissue>Brain</tissue>
    </source>
</reference>
<reference key="2">
    <citation type="journal article" date="2014" name="J. Proteomics">
        <title>An enzyme assisted RP-RPLC approach for in-depth analysis of human liver phosphoproteome.</title>
        <authorList>
            <person name="Bian Y."/>
            <person name="Song C."/>
            <person name="Cheng K."/>
            <person name="Dong M."/>
            <person name="Wang F."/>
            <person name="Huang J."/>
            <person name="Sun D."/>
            <person name="Wang L."/>
            <person name="Ye M."/>
            <person name="Zou H."/>
        </authorList>
    </citation>
    <scope>IDENTIFICATION BY MASS SPECTROMETRY [LARGE SCALE ANALYSIS]</scope>
    <source>
        <tissue>Liver</tissue>
    </source>
</reference>
<sequence>MAVDVAEYHLSVIKSPPGWEVGVYAAGALALLGIAAVSLWKLWTSGSFPSPSPFPNYDYRYLQQKYGESCAEAREKRVPAWNAQRASTRGPPSRKGSLSIEDTFESISELGPLELMGRELDLAPYGTLRKSQSADSLNSISSVSNTFGQDFTLGQVEVSMEYDTASHTLNVAVMQGKDLLEREEASFESCFMRVSLLPDEQIVGISRIQRNAYSIFFDEKFSIPLDPTALEEKSLRFSVFGIDEDERNVSTGVVELKLSVLDLPLQPFSGWLYLQDQNKAADAVGEILLSLSYLPTAERLTVVVVKAKNLIWTNDKTTADPFVKVYLLQDGRKMSKKKTAVKRDDPNPVFNEAMIFSVPAIVLQDLSLRVTVAESSSDGRGDNVGHVIIGPSASGMGTTHWNQMLATLRRPVSMWHAVRRN</sequence>
<feature type="chain" id="PRO_0000183972" description="Synaptotagmin-12">
    <location>
        <begin position="1"/>
        <end position="421"/>
    </location>
</feature>
<feature type="topological domain" description="Vesicular" evidence="4">
    <location>
        <begin position="1"/>
        <end position="18"/>
    </location>
</feature>
<feature type="transmembrane region" description="Helical" evidence="4">
    <location>
        <begin position="19"/>
        <end position="39"/>
    </location>
</feature>
<feature type="topological domain" description="Cytoplasmic" evidence="4">
    <location>
        <begin position="40"/>
        <end position="421"/>
    </location>
</feature>
<feature type="domain" description="C2 1" evidence="5">
    <location>
        <begin position="152"/>
        <end position="272"/>
    </location>
</feature>
<feature type="domain" description="C2 2" evidence="5">
    <location>
        <begin position="283"/>
        <end position="416"/>
    </location>
</feature>
<feature type="modified residue" description="Phosphoserine" evidence="1">
    <location>
        <position position="97"/>
    </location>
</feature>
<feature type="modified residue" description="Phosphoserine" evidence="1">
    <location>
        <position position="99"/>
    </location>
</feature>
<feature type="modified residue" description="Phosphoserine" evidence="2">
    <location>
        <position position="214"/>
    </location>
</feature>
<feature type="sequence variant" id="VAR_034532" description="In dbSNP:rs11227664.">
    <original>N</original>
    <variation>H</variation>
    <location>
        <position position="170"/>
    </location>
</feature>
<protein>
    <recommendedName>
        <fullName evidence="2">Synaptotagmin-12</fullName>
    </recommendedName>
    <alternativeName>
        <fullName evidence="2">Synaptotagmin XII</fullName>
        <shortName evidence="2">SytXII</shortName>
    </alternativeName>
</protein>
<organism>
    <name type="scientific">Homo sapiens</name>
    <name type="common">Human</name>
    <dbReference type="NCBI Taxonomy" id="9606"/>
    <lineage>
        <taxon>Eukaryota</taxon>
        <taxon>Metazoa</taxon>
        <taxon>Chordata</taxon>
        <taxon>Craniata</taxon>
        <taxon>Vertebrata</taxon>
        <taxon>Euteleostomi</taxon>
        <taxon>Mammalia</taxon>
        <taxon>Eutheria</taxon>
        <taxon>Euarchontoglires</taxon>
        <taxon>Primates</taxon>
        <taxon>Haplorrhini</taxon>
        <taxon>Catarrhini</taxon>
        <taxon>Hominidae</taxon>
        <taxon>Homo</taxon>
    </lineage>
</organism>
<keyword id="KW-0968">Cytoplasmic vesicle</keyword>
<keyword id="KW-0472">Membrane</keyword>
<keyword id="KW-0597">Phosphoprotein</keyword>
<keyword id="KW-1267">Proteomics identification</keyword>
<keyword id="KW-1185">Reference proteome</keyword>
<keyword id="KW-0677">Repeat</keyword>
<keyword id="KW-0770">Synapse</keyword>
<keyword id="KW-0812">Transmembrane</keyword>
<keyword id="KW-1133">Transmembrane helix</keyword>